<name>H2A02_CYRHA</name>
<feature type="signal peptide" evidence="2">
    <location>
        <begin position="1"/>
        <end position="22"/>
    </location>
</feature>
<feature type="propeptide" id="PRO_0000400723" evidence="3 4">
    <location>
        <begin position="23"/>
        <end position="48"/>
    </location>
</feature>
<feature type="peptide" id="PRO_0000400724" description="U4-theraphotoxin-Hhn1a">
    <location>
        <begin position="49"/>
        <end position="85"/>
    </location>
</feature>
<feature type="disulfide bond" evidence="1">
    <location>
        <begin position="52"/>
        <end position="66"/>
    </location>
</feature>
<feature type="disulfide bond" evidence="1">
    <location>
        <begin position="56"/>
        <end position="77"/>
    </location>
</feature>
<feature type="disulfide bond" evidence="1">
    <location>
        <begin position="71"/>
        <end position="82"/>
    </location>
</feature>
<accession>D2Y205</accession>
<keyword id="KW-0903">Direct protein sequencing</keyword>
<keyword id="KW-1015">Disulfide bond</keyword>
<keyword id="KW-0528">Neurotoxin</keyword>
<keyword id="KW-0629">Postsynaptic neurotoxin</keyword>
<keyword id="KW-0964">Secreted</keyword>
<keyword id="KW-0732">Signal</keyword>
<keyword id="KW-0800">Toxin</keyword>
<protein>
    <recommendedName>
        <fullName>U4-theraphotoxin-Hhn1a</fullName>
        <shortName>U4-TRTX-Hhn1a</shortName>
    </recommendedName>
    <alternativeName>
        <fullName>Hainantoxin-II.2</fullName>
        <shortName>HNTX-II.2</shortName>
    </alternativeName>
    <alternativeName>
        <fullName>Peptide F8-20.15</fullName>
    </alternativeName>
</protein>
<reference key="1">
    <citation type="journal article" date="2010" name="J. Proteome Res.">
        <title>Molecular diversification of peptide toxins from the tarantula Haplopelma hainanum (Ornithoctonus hainana) venom based on transcriptomic, peptidomic, and genomic analyses.</title>
        <authorList>
            <person name="Tang X."/>
            <person name="Zhang Y."/>
            <person name="Hu W."/>
            <person name="Xu D."/>
            <person name="Tao H."/>
            <person name="Yang X."/>
            <person name="Li Y."/>
            <person name="Jiang L."/>
            <person name="Liang S."/>
        </authorList>
    </citation>
    <scope>NUCLEOTIDE SEQUENCE [LARGE SCALE GENOMIC DNA / MRNA]</scope>
    <scope>PROTEIN SEQUENCE OF 49-85</scope>
    <scope>IDENTIFICATION BY MASS SPECTROMETRY</scope>
    <source>
        <tissue>Venom</tissue>
        <tissue>Venom gland</tissue>
    </source>
</reference>
<reference key="2">
    <citation type="journal article" date="2010" name="Dong Wu Xue Yan Jiu">
        <title>Isolation and characterization of Hainantoxin-II, a new neurotoxic peptide from the Chinese bird spider (Haplopelma hainanum).</title>
        <authorList>
            <person name="Pan J.Y."/>
            <person name="Yu Z.Q."/>
        </authorList>
    </citation>
    <scope>PROTEIN SEQUENCE OF 49-85</scope>
    <scope>FUNCTION</scope>
    <scope>MASS SPECTROMETRY</scope>
    <scope>TOXIC DOSE</scope>
    <source>
        <tissue>Venom</tissue>
    </source>
</reference>
<sequence>MKMTLIAILTCAAVLVLHTTAAEELEAESQLMEVGMPDTELEAVDEERLFECSVSCEIEKEGNKDCKKKKCKGGWKCKFNMCVKV</sequence>
<organism>
    <name type="scientific">Cyriopagopus hainanus</name>
    <name type="common">Chinese bird spider</name>
    <name type="synonym">Haplopelma hainanum</name>
    <dbReference type="NCBI Taxonomy" id="209901"/>
    <lineage>
        <taxon>Eukaryota</taxon>
        <taxon>Metazoa</taxon>
        <taxon>Ecdysozoa</taxon>
        <taxon>Arthropoda</taxon>
        <taxon>Chelicerata</taxon>
        <taxon>Arachnida</taxon>
        <taxon>Araneae</taxon>
        <taxon>Mygalomorphae</taxon>
        <taxon>Theraphosidae</taxon>
        <taxon>Haplopelma</taxon>
    </lineage>
</organism>
<evidence type="ECO:0000250" key="1"/>
<evidence type="ECO:0000255" key="2"/>
<evidence type="ECO:0000269" key="3">
    <source>
    </source>
</evidence>
<evidence type="ECO:0000269" key="4">
    <source>
    </source>
</evidence>
<evidence type="ECO:0000305" key="5"/>
<comment type="function">
    <text evidence="4">Neurotoxin active on both insects and mammals.</text>
</comment>
<comment type="subunit">
    <text>Monomer.</text>
</comment>
<comment type="subcellular location">
    <subcellularLocation>
        <location>Secreted</location>
    </subcellularLocation>
</comment>
<comment type="tissue specificity">
    <text>Expressed by the venom gland.</text>
</comment>
<comment type="mass spectrometry"/>
<comment type="toxic dose">
    <text evidence="4">LD(50) is 1.41 mg/kg by intracerebroventricular injection into mice.</text>
</comment>
<comment type="toxic dose">
    <text evidence="4">PD(50) is 16 mg/kg in cockroaches.</text>
</comment>
<comment type="similarity">
    <text evidence="5">Belongs to the neurotoxin 12 (Hwtx-2) family. 02 (Hwtx-2) subfamily.</text>
</comment>
<proteinExistence type="evidence at protein level"/>
<dbReference type="EMBL" id="GU292882">
    <property type="protein sequence ID" value="ADB56698.1"/>
    <property type="molecule type" value="mRNA"/>
</dbReference>
<dbReference type="EMBL" id="GU293088">
    <property type="protein sequence ID" value="ADB56904.1"/>
    <property type="molecule type" value="Genomic_DNA"/>
</dbReference>
<dbReference type="SMR" id="D2Y205"/>
<dbReference type="ArachnoServer" id="AS001783">
    <property type="toxin name" value="U4-theraphotoxin-Hhn1a"/>
</dbReference>
<dbReference type="GO" id="GO:0005576">
    <property type="term" value="C:extracellular region"/>
    <property type="evidence" value="ECO:0007669"/>
    <property type="project" value="UniProtKB-SubCell"/>
</dbReference>
<dbReference type="GO" id="GO:0035792">
    <property type="term" value="C:host cell postsynaptic membrane"/>
    <property type="evidence" value="ECO:0007669"/>
    <property type="project" value="UniProtKB-KW"/>
</dbReference>
<dbReference type="GO" id="GO:0090729">
    <property type="term" value="F:toxin activity"/>
    <property type="evidence" value="ECO:0007669"/>
    <property type="project" value="UniProtKB-KW"/>
</dbReference>
<dbReference type="InterPro" id="IPR012625">
    <property type="entry name" value="Hwtx-2-like"/>
</dbReference>
<dbReference type="Pfam" id="PF08089">
    <property type="entry name" value="Toxin_20"/>
    <property type="match status" value="1"/>
</dbReference>
<dbReference type="SUPFAM" id="SSF57059">
    <property type="entry name" value="omega toxin-like"/>
    <property type="match status" value="1"/>
</dbReference>
<dbReference type="PROSITE" id="PS60022">
    <property type="entry name" value="HWTX_2"/>
    <property type="match status" value="1"/>
</dbReference>